<keyword id="KW-0997">Cell inner membrane</keyword>
<keyword id="KW-1003">Cell membrane</keyword>
<keyword id="KW-0472">Membrane</keyword>
<keyword id="KW-0520">NAD</keyword>
<keyword id="KW-0560">Oxidoreductase</keyword>
<proteinExistence type="inferred from homology"/>
<evidence type="ECO:0000255" key="1">
    <source>
        <dbReference type="HAMAP-Rule" id="MF_01415"/>
    </source>
</evidence>
<gene>
    <name evidence="1" type="primary">kefG</name>
    <name type="ordered locus">YE3941</name>
</gene>
<reference key="1">
    <citation type="journal article" date="2006" name="PLoS Genet.">
        <title>The complete genome sequence and comparative genome analysis of the high pathogenicity Yersinia enterocolitica strain 8081.</title>
        <authorList>
            <person name="Thomson N.R."/>
            <person name="Howard S."/>
            <person name="Wren B.W."/>
            <person name="Holden M.T.G."/>
            <person name="Crossman L."/>
            <person name="Challis G.L."/>
            <person name="Churcher C."/>
            <person name="Mungall K."/>
            <person name="Brooks K."/>
            <person name="Chillingworth T."/>
            <person name="Feltwell T."/>
            <person name="Abdellah Z."/>
            <person name="Hauser H."/>
            <person name="Jagels K."/>
            <person name="Maddison M."/>
            <person name="Moule S."/>
            <person name="Sanders M."/>
            <person name="Whitehead S."/>
            <person name="Quail M.A."/>
            <person name="Dougan G."/>
            <person name="Parkhill J."/>
            <person name="Prentice M.B."/>
        </authorList>
    </citation>
    <scope>NUCLEOTIDE SEQUENCE [LARGE SCALE GENOMIC DNA]</scope>
    <source>
        <strain>NCTC 13174 / 8081</strain>
    </source>
</reference>
<comment type="function">
    <text evidence="1">Regulatory subunit of a potassium efflux system that confers protection against electrophiles. Required for full activity of KefB.</text>
</comment>
<comment type="catalytic activity">
    <reaction evidence="1">
        <text>a quinone + NADH + H(+) = a quinol + NAD(+)</text>
        <dbReference type="Rhea" id="RHEA:46160"/>
        <dbReference type="ChEBI" id="CHEBI:15378"/>
        <dbReference type="ChEBI" id="CHEBI:24646"/>
        <dbReference type="ChEBI" id="CHEBI:57540"/>
        <dbReference type="ChEBI" id="CHEBI:57945"/>
        <dbReference type="ChEBI" id="CHEBI:132124"/>
        <dbReference type="EC" id="1.6.5.2"/>
    </reaction>
</comment>
<comment type="catalytic activity">
    <reaction evidence="1">
        <text>a quinone + NADPH + H(+) = a quinol + NADP(+)</text>
        <dbReference type="Rhea" id="RHEA:46164"/>
        <dbReference type="ChEBI" id="CHEBI:15378"/>
        <dbReference type="ChEBI" id="CHEBI:24646"/>
        <dbReference type="ChEBI" id="CHEBI:57783"/>
        <dbReference type="ChEBI" id="CHEBI:58349"/>
        <dbReference type="ChEBI" id="CHEBI:132124"/>
        <dbReference type="EC" id="1.6.5.2"/>
    </reaction>
</comment>
<comment type="subunit">
    <text evidence="1">Interacts with KefB.</text>
</comment>
<comment type="subcellular location">
    <subcellularLocation>
        <location evidence="1">Cell inner membrane</location>
        <topology evidence="1">Peripheral membrane protein</topology>
        <orientation evidence="1">Cytoplasmic side</orientation>
    </subcellularLocation>
</comment>
<comment type="similarity">
    <text evidence="1">Belongs to the NAD(P)H dehydrogenase (quinone) family. KefG subfamily.</text>
</comment>
<organism>
    <name type="scientific">Yersinia enterocolitica serotype O:8 / biotype 1B (strain NCTC 13174 / 8081)</name>
    <dbReference type="NCBI Taxonomy" id="393305"/>
    <lineage>
        <taxon>Bacteria</taxon>
        <taxon>Pseudomonadati</taxon>
        <taxon>Pseudomonadota</taxon>
        <taxon>Gammaproteobacteria</taxon>
        <taxon>Enterobacterales</taxon>
        <taxon>Yersiniaceae</taxon>
        <taxon>Yersinia</taxon>
    </lineage>
</organism>
<accession>A1JS77</accession>
<dbReference type="EC" id="1.6.5.2" evidence="1"/>
<dbReference type="EMBL" id="AM286415">
    <property type="protein sequence ID" value="CAL13960.1"/>
    <property type="molecule type" value="Genomic_DNA"/>
</dbReference>
<dbReference type="RefSeq" id="YP_001008086.1">
    <property type="nucleotide sequence ID" value="NC_008800.1"/>
</dbReference>
<dbReference type="SMR" id="A1JS77"/>
<dbReference type="KEGG" id="yen:YE3941"/>
<dbReference type="PATRIC" id="fig|393305.7.peg.4191"/>
<dbReference type="eggNOG" id="COG2249">
    <property type="taxonomic scope" value="Bacteria"/>
</dbReference>
<dbReference type="HOGENOM" id="CLU_058643_0_1_6"/>
<dbReference type="OrthoDB" id="9798454at2"/>
<dbReference type="Proteomes" id="UP000000642">
    <property type="component" value="Chromosome"/>
</dbReference>
<dbReference type="GO" id="GO:0005886">
    <property type="term" value="C:plasma membrane"/>
    <property type="evidence" value="ECO:0007669"/>
    <property type="project" value="UniProtKB-SubCell"/>
</dbReference>
<dbReference type="GO" id="GO:0009055">
    <property type="term" value="F:electron transfer activity"/>
    <property type="evidence" value="ECO:0007669"/>
    <property type="project" value="TreeGrafter"/>
</dbReference>
<dbReference type="GO" id="GO:0010181">
    <property type="term" value="F:FMN binding"/>
    <property type="evidence" value="ECO:0007669"/>
    <property type="project" value="TreeGrafter"/>
</dbReference>
<dbReference type="GO" id="GO:0050136">
    <property type="term" value="F:NADH:ubiquinone reductase (non-electrogenic) activity"/>
    <property type="evidence" value="ECO:0007669"/>
    <property type="project" value="RHEA"/>
</dbReference>
<dbReference type="GO" id="GO:0008753">
    <property type="term" value="F:NADPH dehydrogenase (quinone) activity"/>
    <property type="evidence" value="ECO:0007669"/>
    <property type="project" value="RHEA"/>
</dbReference>
<dbReference type="GO" id="GO:1901381">
    <property type="term" value="P:positive regulation of potassium ion transmembrane transport"/>
    <property type="evidence" value="ECO:0007669"/>
    <property type="project" value="UniProtKB-UniRule"/>
</dbReference>
<dbReference type="GO" id="GO:0006813">
    <property type="term" value="P:potassium ion transport"/>
    <property type="evidence" value="ECO:0007669"/>
    <property type="project" value="InterPro"/>
</dbReference>
<dbReference type="FunFam" id="3.40.50.360:FF:000013">
    <property type="entry name" value="Glutathione-regulated potassium-efflux system ancillary protein KefG"/>
    <property type="match status" value="1"/>
</dbReference>
<dbReference type="Gene3D" id="3.40.50.360">
    <property type="match status" value="1"/>
</dbReference>
<dbReference type="HAMAP" id="MF_01415">
    <property type="entry name" value="K_H_efflux_KefG"/>
    <property type="match status" value="1"/>
</dbReference>
<dbReference type="InterPro" id="IPR003680">
    <property type="entry name" value="Flavodoxin_fold"/>
</dbReference>
<dbReference type="InterPro" id="IPR029039">
    <property type="entry name" value="Flavoprotein-like_sf"/>
</dbReference>
<dbReference type="InterPro" id="IPR023947">
    <property type="entry name" value="K_H_efflux_KefG"/>
</dbReference>
<dbReference type="InterPro" id="IPR046980">
    <property type="entry name" value="KefG/KefF"/>
</dbReference>
<dbReference type="NCBIfam" id="NF003430">
    <property type="entry name" value="PRK04930.1"/>
    <property type="match status" value="1"/>
</dbReference>
<dbReference type="PANTHER" id="PTHR47307">
    <property type="entry name" value="GLUTATHIONE-REGULATED POTASSIUM-EFFLUX SYSTEM ANCILLARY PROTEIN KEFG"/>
    <property type="match status" value="1"/>
</dbReference>
<dbReference type="PANTHER" id="PTHR47307:SF1">
    <property type="entry name" value="GLUTATHIONE-REGULATED POTASSIUM-EFFLUX SYSTEM ANCILLARY PROTEIN KEFG"/>
    <property type="match status" value="1"/>
</dbReference>
<dbReference type="Pfam" id="PF02525">
    <property type="entry name" value="Flavodoxin_2"/>
    <property type="match status" value="1"/>
</dbReference>
<dbReference type="SUPFAM" id="SSF52218">
    <property type="entry name" value="Flavoproteins"/>
    <property type="match status" value="1"/>
</dbReference>
<sequence length="184" mass="21266">MMSQPPKVLLLYAHPESQDSVANRVLLQPVQQLEHVTVHDLYAHYPDFFIDIHYEQQLLREHQIIVFQHPLYTYSCPALLKEWLDRVLARGFANGVGGHALTGKYWRSVITTGEPEGAYRAGGYNRYPMEDILRPFELTAAMCHMHWMNPMIIYWARRQKPEVLASHAQAYAQWLQSPLATGGH</sequence>
<feature type="chain" id="PRO_1000068485" description="Glutathione-regulated potassium-efflux system ancillary protein KefG">
    <location>
        <begin position="1"/>
        <end position="184"/>
    </location>
</feature>
<name>KEFG_YERE8</name>
<protein>
    <recommendedName>
        <fullName evidence="1">Glutathione-regulated potassium-efflux system ancillary protein KefG</fullName>
    </recommendedName>
    <alternativeName>
        <fullName evidence="1">Putative quinone oxidoreductase KefG</fullName>
        <ecNumber evidence="1">1.6.5.2</ecNumber>
    </alternativeName>
</protein>